<reference key="1">
    <citation type="submission" date="2003-06" db="EMBL/GenBank/DDBJ databases">
        <authorList>
            <consortium name="NIH - Zebrafish Gene Collection (ZGC) project"/>
        </authorList>
    </citation>
    <scope>NUCLEOTIDE SEQUENCE [LARGE SCALE MRNA]</scope>
    <source>
        <tissue>Kidney</tissue>
    </source>
</reference>
<reference key="2">
    <citation type="journal article" date="2008" name="J. Proteome Res.">
        <title>Online automated in vivo zebrafish phosphoproteomics: from large-scale analysis down to a single embryo.</title>
        <authorList>
            <person name="Lemeer S."/>
            <person name="Pinkse M.W.H."/>
            <person name="Mohammed S."/>
            <person name="van Breukelen B."/>
            <person name="den Hertog J."/>
            <person name="Slijper M."/>
            <person name="Heck A.J.R."/>
        </authorList>
    </citation>
    <scope>PHOSPHORYLATION [LARGE SCALE ANALYSIS] AT SER-253</scope>
    <scope>IDENTIFICATION BY MASS SPECTROMETRY</scope>
    <source>
        <tissue>Embryo</tissue>
    </source>
</reference>
<sequence length="309" mass="34899">METEAEVIPIWQNKPHGSTRSVVRRIGSTLPLKPCPRACFQELPGLPSMRSLDGPLVPTLADIAWIADDEEETYARVRSDTRPLRHEWRPTPLLVMHRNSSVPNFRREGRRVEGLRKPGVTALNRTTALQDELSRLRAQIAKIVAADSDSNPITPDLLSPDDTSMGFSMAPFETAAYQPPPTASFVISDVTEEDEEEEEEEDREEEEEDVSELVPDPMPPVSMTASATFDLDRPTMDFREPEEDTVSLSKSTSFADVMDMLKDMNRLKMSKDRYNRGCTSLREEDSASLISEALRKKFVLKDDDISMRK</sequence>
<organism>
    <name type="scientific">Danio rerio</name>
    <name type="common">Zebrafish</name>
    <name type="synonym">Brachydanio rerio</name>
    <dbReference type="NCBI Taxonomy" id="7955"/>
    <lineage>
        <taxon>Eukaryota</taxon>
        <taxon>Metazoa</taxon>
        <taxon>Chordata</taxon>
        <taxon>Craniata</taxon>
        <taxon>Vertebrata</taxon>
        <taxon>Euteleostomi</taxon>
        <taxon>Actinopterygii</taxon>
        <taxon>Neopterygii</taxon>
        <taxon>Teleostei</taxon>
        <taxon>Ostariophysi</taxon>
        <taxon>Cypriniformes</taxon>
        <taxon>Danionidae</taxon>
        <taxon>Danioninae</taxon>
        <taxon>Danio</taxon>
    </lineage>
</organism>
<name>MFR1L_DANRE</name>
<dbReference type="EMBL" id="BC053148">
    <property type="protein sequence ID" value="AAH53148.1"/>
    <property type="molecule type" value="mRNA"/>
</dbReference>
<dbReference type="RefSeq" id="NP_956178.1">
    <property type="nucleotide sequence ID" value="NM_199884.1"/>
</dbReference>
<dbReference type="RefSeq" id="XP_005158551.1">
    <property type="nucleotide sequence ID" value="XM_005158494.5"/>
</dbReference>
<dbReference type="SMR" id="Q7T3E8"/>
<dbReference type="FunCoup" id="Q7T3E8">
    <property type="interactions" value="2095"/>
</dbReference>
<dbReference type="STRING" id="7955.ENSDARP00000018738"/>
<dbReference type="iPTMnet" id="Q7T3E8"/>
<dbReference type="PaxDb" id="7955-ENSDARP00000018738"/>
<dbReference type="Ensembl" id="ENSDART00000007271">
    <property type="protein sequence ID" value="ENSDARP00000018738"/>
    <property type="gene ID" value="ENSDARG00000003940"/>
</dbReference>
<dbReference type="Ensembl" id="ENSDART00000180992">
    <property type="protein sequence ID" value="ENSDARP00000151812"/>
    <property type="gene ID" value="ENSDARG00000111141"/>
</dbReference>
<dbReference type="GeneID" id="334296"/>
<dbReference type="KEGG" id="dre:334296"/>
<dbReference type="AGR" id="ZFIN:ZDB-GENE-030131-6228"/>
<dbReference type="CTD" id="56181"/>
<dbReference type="ZFIN" id="ZDB-GENE-030131-6228">
    <property type="gene designation" value="mtfr1l"/>
</dbReference>
<dbReference type="eggNOG" id="ENOG502QRAC">
    <property type="taxonomic scope" value="Eukaryota"/>
</dbReference>
<dbReference type="HOGENOM" id="CLU_083041_0_0_1"/>
<dbReference type="InParanoid" id="Q7T3E8"/>
<dbReference type="OMA" id="LRHKWKP"/>
<dbReference type="OrthoDB" id="9930891at2759"/>
<dbReference type="PhylomeDB" id="Q7T3E8"/>
<dbReference type="TreeFam" id="TF331404"/>
<dbReference type="PRO" id="PR:Q7T3E8"/>
<dbReference type="Proteomes" id="UP000000437">
    <property type="component" value="Alternate scaffold 17"/>
</dbReference>
<dbReference type="Proteomes" id="UP000000437">
    <property type="component" value="Chromosome 17"/>
</dbReference>
<dbReference type="Bgee" id="ENSDARG00000003940">
    <property type="expression patterns" value="Expressed in brain and 23 other cell types or tissues"/>
</dbReference>
<dbReference type="ExpressionAtlas" id="Q7T3E8">
    <property type="expression patterns" value="baseline"/>
</dbReference>
<dbReference type="GO" id="GO:0005741">
    <property type="term" value="C:mitochondrial outer membrane"/>
    <property type="evidence" value="ECO:0007669"/>
    <property type="project" value="UniProtKB-SubCell"/>
</dbReference>
<dbReference type="GO" id="GO:0005739">
    <property type="term" value="C:mitochondrion"/>
    <property type="evidence" value="ECO:0000318"/>
    <property type="project" value="GO_Central"/>
</dbReference>
<dbReference type="GO" id="GO:0009060">
    <property type="term" value="P:aerobic respiration"/>
    <property type="evidence" value="ECO:0000318"/>
    <property type="project" value="GO_Central"/>
</dbReference>
<dbReference type="GO" id="GO:0000266">
    <property type="term" value="P:mitochondrial fission"/>
    <property type="evidence" value="ECO:0000318"/>
    <property type="project" value="GO_Central"/>
</dbReference>
<dbReference type="InterPro" id="IPR007972">
    <property type="entry name" value="Mtfr1"/>
</dbReference>
<dbReference type="PANTHER" id="PTHR14215:SF3">
    <property type="entry name" value="MITOCHONDRIAL FISSION REGULATOR 1-LIKE"/>
    <property type="match status" value="1"/>
</dbReference>
<dbReference type="PANTHER" id="PTHR14215">
    <property type="entry name" value="PROTEIN OF UNKNOWN FUNCTION DUF729"/>
    <property type="match status" value="1"/>
</dbReference>
<dbReference type="Pfam" id="PF05308">
    <property type="entry name" value="Mito_fiss_reg"/>
    <property type="match status" value="1"/>
</dbReference>
<protein>
    <recommendedName>
        <fullName>Mitochondrial fission regulator 1-like</fullName>
    </recommendedName>
</protein>
<feature type="chain" id="PRO_0000341570" description="Mitochondrial fission regulator 1-like">
    <location>
        <begin position="1"/>
        <end position="309"/>
    </location>
</feature>
<feature type="region of interest" description="Disordered" evidence="2">
    <location>
        <begin position="189"/>
        <end position="221"/>
    </location>
</feature>
<feature type="compositionally biased region" description="Acidic residues" evidence="2">
    <location>
        <begin position="190"/>
        <end position="211"/>
    </location>
</feature>
<feature type="modified residue" description="Phosphoserine" evidence="3">
    <location>
        <position position="253"/>
    </location>
</feature>
<proteinExistence type="evidence at protein level"/>
<accession>Q7T3E8</accession>
<gene>
    <name type="primary">mtfr1l</name>
    <name type="synonym">fam54b</name>
    <name type="ORF">zgc:63922</name>
</gene>
<keyword id="KW-0472">Membrane</keyword>
<keyword id="KW-0496">Mitochondrion</keyword>
<keyword id="KW-1000">Mitochondrion outer membrane</keyword>
<keyword id="KW-0597">Phosphoprotein</keyword>
<keyword id="KW-1185">Reference proteome</keyword>
<comment type="function">
    <text evidence="1">Mitochondrial protein required for adaptation of miochondrial dynamics to metabolic changes. Regulates mitochondrial morphology at steady state and mediates AMPK-dependent stress-induced mitochondrial fragmentation via the control of OPA1 levels.</text>
</comment>
<comment type="subcellular location">
    <subcellularLocation>
        <location evidence="1">Mitochondrion outer membrane</location>
        <topology evidence="1">Peripheral membrane protein</topology>
        <orientation evidence="1">Cytoplasmic side</orientation>
    </subcellularLocation>
</comment>
<comment type="similarity">
    <text evidence="4">Belongs to the MTFR1 family.</text>
</comment>
<evidence type="ECO:0000250" key="1">
    <source>
        <dbReference type="UniProtKB" id="Q9H019"/>
    </source>
</evidence>
<evidence type="ECO:0000256" key="2">
    <source>
        <dbReference type="SAM" id="MobiDB-lite"/>
    </source>
</evidence>
<evidence type="ECO:0000269" key="3">
    <source>
    </source>
</evidence>
<evidence type="ECO:0000305" key="4"/>